<gene>
    <name evidence="1" type="primary">pyrI</name>
    <name type="ordered locus">SSPA3957</name>
</gene>
<comment type="function">
    <text evidence="1">Involved in allosteric regulation of aspartate carbamoyltransferase.</text>
</comment>
<comment type="cofactor">
    <cofactor evidence="1">
        <name>Zn(2+)</name>
        <dbReference type="ChEBI" id="CHEBI:29105"/>
    </cofactor>
    <text evidence="1">Binds 1 zinc ion per subunit.</text>
</comment>
<comment type="subunit">
    <text evidence="1">Contains catalytic and regulatory chains.</text>
</comment>
<comment type="similarity">
    <text evidence="1">Belongs to the PyrI family.</text>
</comment>
<accession>B5BKQ8</accession>
<dbReference type="EMBL" id="FM200053">
    <property type="protein sequence ID" value="CAR62246.1"/>
    <property type="molecule type" value="Genomic_DNA"/>
</dbReference>
<dbReference type="RefSeq" id="WP_000148563.1">
    <property type="nucleotide sequence ID" value="NC_011147.1"/>
</dbReference>
<dbReference type="SMR" id="B5BKQ8"/>
<dbReference type="KEGG" id="sek:SSPA3957"/>
<dbReference type="HOGENOM" id="CLU_128576_0_0_6"/>
<dbReference type="Proteomes" id="UP000001869">
    <property type="component" value="Chromosome"/>
</dbReference>
<dbReference type="GO" id="GO:0009347">
    <property type="term" value="C:aspartate carbamoyltransferase complex"/>
    <property type="evidence" value="ECO:0007669"/>
    <property type="project" value="InterPro"/>
</dbReference>
<dbReference type="GO" id="GO:0046872">
    <property type="term" value="F:metal ion binding"/>
    <property type="evidence" value="ECO:0007669"/>
    <property type="project" value="UniProtKB-KW"/>
</dbReference>
<dbReference type="GO" id="GO:0006207">
    <property type="term" value="P:'de novo' pyrimidine nucleobase biosynthetic process"/>
    <property type="evidence" value="ECO:0007669"/>
    <property type="project" value="InterPro"/>
</dbReference>
<dbReference type="GO" id="GO:0006221">
    <property type="term" value="P:pyrimidine nucleotide biosynthetic process"/>
    <property type="evidence" value="ECO:0007669"/>
    <property type="project" value="UniProtKB-UniRule"/>
</dbReference>
<dbReference type="FunFam" id="2.30.30.20:FF:000001">
    <property type="entry name" value="Aspartate carbamoyltransferase regulatory chain"/>
    <property type="match status" value="1"/>
</dbReference>
<dbReference type="FunFam" id="3.30.70.140:FF:000001">
    <property type="entry name" value="Aspartate carbamoyltransferase regulatory chain"/>
    <property type="match status" value="1"/>
</dbReference>
<dbReference type="Gene3D" id="2.30.30.20">
    <property type="entry name" value="Aspartate carbamoyltransferase regulatory subunit, C-terminal domain"/>
    <property type="match status" value="1"/>
</dbReference>
<dbReference type="Gene3D" id="3.30.70.140">
    <property type="entry name" value="Aspartate carbamoyltransferase regulatory subunit, N-terminal domain"/>
    <property type="match status" value="1"/>
</dbReference>
<dbReference type="HAMAP" id="MF_00002">
    <property type="entry name" value="Asp_carb_tr_reg"/>
    <property type="match status" value="1"/>
</dbReference>
<dbReference type="InterPro" id="IPR020545">
    <property type="entry name" value="Asp_carbamoyltransf_reg_N"/>
</dbReference>
<dbReference type="InterPro" id="IPR002801">
    <property type="entry name" value="Asp_carbamoylTrfase_reg"/>
</dbReference>
<dbReference type="InterPro" id="IPR020542">
    <property type="entry name" value="Asp_carbamoyltrfase_reg_C"/>
</dbReference>
<dbReference type="InterPro" id="IPR036792">
    <property type="entry name" value="Asp_carbatrfase_reg_C_sf"/>
</dbReference>
<dbReference type="InterPro" id="IPR036793">
    <property type="entry name" value="Asp_carbatrfase_reg_N_sf"/>
</dbReference>
<dbReference type="NCBIfam" id="TIGR00240">
    <property type="entry name" value="ATCase_reg"/>
    <property type="match status" value="1"/>
</dbReference>
<dbReference type="PANTHER" id="PTHR35805">
    <property type="entry name" value="ASPARTATE CARBAMOYLTRANSFERASE REGULATORY CHAIN"/>
    <property type="match status" value="1"/>
</dbReference>
<dbReference type="PANTHER" id="PTHR35805:SF1">
    <property type="entry name" value="ASPARTATE CARBAMOYLTRANSFERASE REGULATORY CHAIN"/>
    <property type="match status" value="1"/>
</dbReference>
<dbReference type="Pfam" id="PF01948">
    <property type="entry name" value="PyrI"/>
    <property type="match status" value="1"/>
</dbReference>
<dbReference type="Pfam" id="PF02748">
    <property type="entry name" value="PyrI_C"/>
    <property type="match status" value="1"/>
</dbReference>
<dbReference type="SUPFAM" id="SSF57825">
    <property type="entry name" value="Aspartate carbamoyltransferase, Regulatory-chain, C-terminal domain"/>
    <property type="match status" value="1"/>
</dbReference>
<dbReference type="SUPFAM" id="SSF54893">
    <property type="entry name" value="Aspartate carbamoyltransferase, Regulatory-chain, N-terminal domain"/>
    <property type="match status" value="1"/>
</dbReference>
<evidence type="ECO:0000255" key="1">
    <source>
        <dbReference type="HAMAP-Rule" id="MF_00002"/>
    </source>
</evidence>
<feature type="chain" id="PRO_1000088839" description="Aspartate carbamoyltransferase regulatory chain">
    <location>
        <begin position="1"/>
        <end position="153"/>
    </location>
</feature>
<feature type="binding site" evidence="1">
    <location>
        <position position="109"/>
    </location>
    <ligand>
        <name>Zn(2+)</name>
        <dbReference type="ChEBI" id="CHEBI:29105"/>
    </ligand>
</feature>
<feature type="binding site" evidence="1">
    <location>
        <position position="114"/>
    </location>
    <ligand>
        <name>Zn(2+)</name>
        <dbReference type="ChEBI" id="CHEBI:29105"/>
    </ligand>
</feature>
<feature type="binding site" evidence="1">
    <location>
        <position position="138"/>
    </location>
    <ligand>
        <name>Zn(2+)</name>
        <dbReference type="ChEBI" id="CHEBI:29105"/>
    </ligand>
</feature>
<feature type="binding site" evidence="1">
    <location>
        <position position="141"/>
    </location>
    <ligand>
        <name>Zn(2+)</name>
        <dbReference type="ChEBI" id="CHEBI:29105"/>
    </ligand>
</feature>
<sequence length="153" mass="17087">MTHDNKLQVEAIKCGTVIDHIPAQVGFKLLSLFKLTETDQRITIGLNLPSGEMGRKDLIKIENTFLTDEQINQLALYAPQATVNRIDNYDVVGKSRPSLPERINNVLVCPNSNCISHAEPVSSSFAVKKRANDIALKCKYCEKEFSHYVVLAN</sequence>
<name>PYRI_SALPK</name>
<keyword id="KW-0479">Metal-binding</keyword>
<keyword id="KW-0665">Pyrimidine biosynthesis</keyword>
<keyword id="KW-0862">Zinc</keyword>
<proteinExistence type="inferred from homology"/>
<protein>
    <recommendedName>
        <fullName evidence="1">Aspartate carbamoyltransferase regulatory chain</fullName>
    </recommendedName>
</protein>
<reference key="1">
    <citation type="journal article" date="2009" name="BMC Genomics">
        <title>Pseudogene accumulation in the evolutionary histories of Salmonella enterica serovars Paratyphi A and Typhi.</title>
        <authorList>
            <person name="Holt K.E."/>
            <person name="Thomson N.R."/>
            <person name="Wain J."/>
            <person name="Langridge G.C."/>
            <person name="Hasan R."/>
            <person name="Bhutta Z.A."/>
            <person name="Quail M.A."/>
            <person name="Norbertczak H."/>
            <person name="Walker D."/>
            <person name="Simmonds M."/>
            <person name="White B."/>
            <person name="Bason N."/>
            <person name="Mungall K."/>
            <person name="Dougan G."/>
            <person name="Parkhill J."/>
        </authorList>
    </citation>
    <scope>NUCLEOTIDE SEQUENCE [LARGE SCALE GENOMIC DNA]</scope>
    <source>
        <strain>AKU_12601</strain>
    </source>
</reference>
<organism>
    <name type="scientific">Salmonella paratyphi A (strain AKU_12601)</name>
    <dbReference type="NCBI Taxonomy" id="554290"/>
    <lineage>
        <taxon>Bacteria</taxon>
        <taxon>Pseudomonadati</taxon>
        <taxon>Pseudomonadota</taxon>
        <taxon>Gammaproteobacteria</taxon>
        <taxon>Enterobacterales</taxon>
        <taxon>Enterobacteriaceae</taxon>
        <taxon>Salmonella</taxon>
    </lineage>
</organism>